<organism evidence="9">
    <name type="scientific">Caenorhabditis elegans</name>
    <dbReference type="NCBI Taxonomy" id="6239"/>
    <lineage>
        <taxon>Eukaryota</taxon>
        <taxon>Metazoa</taxon>
        <taxon>Ecdysozoa</taxon>
        <taxon>Nematoda</taxon>
        <taxon>Chromadorea</taxon>
        <taxon>Rhabditida</taxon>
        <taxon>Rhabditina</taxon>
        <taxon>Rhabditomorpha</taxon>
        <taxon>Rhabditoidea</taxon>
        <taxon>Rhabditidae</taxon>
        <taxon>Peloderinae</taxon>
        <taxon>Caenorhabditis</taxon>
    </lineage>
</organism>
<keyword id="KW-0025">Alternative splicing</keyword>
<keyword id="KW-0469">Meiosis</keyword>
<keyword id="KW-0479">Metal-binding</keyword>
<keyword id="KW-1185">Reference proteome</keyword>
<keyword id="KW-0862">Zinc</keyword>
<keyword id="KW-0863">Zinc-finger</keyword>
<feature type="chain" id="PRO_0000434555" description="Kinase suppressor of Ras B" evidence="7">
    <location>
        <begin position="1"/>
        <end position="550"/>
    </location>
</feature>
<feature type="domain" description="Protein kinase" evidence="1">
    <location>
        <begin position="248"/>
        <end position="528"/>
    </location>
</feature>
<feature type="zinc finger region" description="Phorbol-ester/DAG-type" evidence="2">
    <location>
        <begin position="90"/>
        <end position="145"/>
    </location>
</feature>
<feature type="region of interest" description="Disordered" evidence="3">
    <location>
        <begin position="21"/>
        <end position="87"/>
    </location>
</feature>
<feature type="region of interest" description="Disordered" evidence="3">
    <location>
        <begin position="172"/>
        <end position="196"/>
    </location>
</feature>
<feature type="region of interest" description="Disordered" evidence="3">
    <location>
        <begin position="530"/>
        <end position="550"/>
    </location>
</feature>
<feature type="compositionally biased region" description="Low complexity" evidence="3">
    <location>
        <begin position="21"/>
        <end position="56"/>
    </location>
</feature>
<feature type="compositionally biased region" description="Low complexity" evidence="3">
    <location>
        <begin position="63"/>
        <end position="75"/>
    </location>
</feature>
<feature type="compositionally biased region" description="Low complexity" evidence="3">
    <location>
        <begin position="177"/>
        <end position="193"/>
    </location>
</feature>
<feature type="splice variant" id="VSP_057949" description="In isoform c." evidence="7">
    <location>
        <begin position="1"/>
        <end position="92"/>
    </location>
</feature>
<feature type="splice variant" id="VSP_057950" description="In isoform b." evidence="7">
    <location>
        <begin position="9"/>
        <end position="12"/>
    </location>
</feature>
<feature type="splice variant" id="VSP_057951" description="In isoform b." evidence="7">
    <location>
        <begin position="163"/>
        <end position="198"/>
    </location>
</feature>
<dbReference type="EMBL" id="AY077614">
    <property type="protein sequence ID" value="AAL79358.1"/>
    <property type="molecule type" value="mRNA"/>
</dbReference>
<dbReference type="EMBL" id="AY077615">
    <property type="protein sequence ID" value="AAL79359.1"/>
    <property type="molecule type" value="mRNA"/>
</dbReference>
<dbReference type="EMBL" id="BX284601">
    <property type="protein sequence ID" value="CAB70239.2"/>
    <property type="molecule type" value="Genomic_DNA"/>
</dbReference>
<dbReference type="EMBL" id="BX284601">
    <property type="protein sequence ID" value="CAB70240.2"/>
    <property type="molecule type" value="Genomic_DNA"/>
</dbReference>
<dbReference type="EMBL" id="BX284601">
    <property type="protein sequence ID" value="CAQ76483.1"/>
    <property type="molecule type" value="Genomic_DNA"/>
</dbReference>
<dbReference type="RefSeq" id="NP_001021518.1">
    <molecule id="G5EDA5-1"/>
    <property type="nucleotide sequence ID" value="NM_001026347.6"/>
</dbReference>
<dbReference type="RefSeq" id="NP_001021519.1">
    <molecule id="G5EDA5-2"/>
    <property type="nucleotide sequence ID" value="NM_001026348.4"/>
</dbReference>
<dbReference type="RefSeq" id="NP_001129779.1">
    <molecule id="G5EDA5-3"/>
    <property type="nucleotide sequence ID" value="NM_001136307.4"/>
</dbReference>
<dbReference type="SMR" id="G5EDA5"/>
<dbReference type="FunCoup" id="G5EDA5">
    <property type="interactions" value="108"/>
</dbReference>
<dbReference type="STRING" id="6239.F58D5.4a.1"/>
<dbReference type="PaxDb" id="6239-F58D5.4a"/>
<dbReference type="EnsemblMetazoa" id="F58D5.4a.1">
    <molecule id="G5EDA5-1"/>
    <property type="protein sequence ID" value="F58D5.4a.1"/>
    <property type="gene ID" value="WBGene00002240"/>
</dbReference>
<dbReference type="EnsemblMetazoa" id="F58D5.4b.1">
    <molecule id="G5EDA5-2"/>
    <property type="protein sequence ID" value="F58D5.4b.1"/>
    <property type="gene ID" value="WBGene00002240"/>
</dbReference>
<dbReference type="EnsemblMetazoa" id="F58D5.4c.1">
    <molecule id="G5EDA5-3"/>
    <property type="protein sequence ID" value="F58D5.4c.1"/>
    <property type="gene ID" value="WBGene00002240"/>
</dbReference>
<dbReference type="GeneID" id="173085"/>
<dbReference type="KEGG" id="cel:CELE_F58D5.4"/>
<dbReference type="AGR" id="WB:WBGene00002240"/>
<dbReference type="CTD" id="173085"/>
<dbReference type="WormBase" id="F58D5.4a">
    <molecule id="G5EDA5-1"/>
    <property type="protein sequence ID" value="CE31017"/>
    <property type="gene ID" value="WBGene00002240"/>
    <property type="gene designation" value="ksr-2"/>
</dbReference>
<dbReference type="WormBase" id="F58D5.4b">
    <molecule id="G5EDA5-2"/>
    <property type="protein sequence ID" value="CE31018"/>
    <property type="gene ID" value="WBGene00002240"/>
    <property type="gene designation" value="ksr-2"/>
</dbReference>
<dbReference type="WormBase" id="F58D5.4c">
    <molecule id="G5EDA5-3"/>
    <property type="protein sequence ID" value="CE42786"/>
    <property type="gene ID" value="WBGene00002240"/>
    <property type="gene designation" value="ksr-2"/>
</dbReference>
<dbReference type="eggNOG" id="KOG0193">
    <property type="taxonomic scope" value="Eukaryota"/>
</dbReference>
<dbReference type="InParanoid" id="G5EDA5"/>
<dbReference type="OMA" id="AHENPLF"/>
<dbReference type="OrthoDB" id="774951at2759"/>
<dbReference type="PhylomeDB" id="G5EDA5"/>
<dbReference type="Reactome" id="R-CEL-5674135">
    <property type="pathway name" value="MAP2K and MAPK activation"/>
</dbReference>
<dbReference type="SignaLink" id="G5EDA5"/>
<dbReference type="PRO" id="PR:G5EDA5"/>
<dbReference type="Proteomes" id="UP000001940">
    <property type="component" value="Chromosome I"/>
</dbReference>
<dbReference type="Bgee" id="WBGene00002240">
    <property type="expression patterns" value="Expressed in adult organism and 4 other cell types or tissues"/>
</dbReference>
<dbReference type="GO" id="GO:0005737">
    <property type="term" value="C:cytoplasm"/>
    <property type="evidence" value="ECO:0000318"/>
    <property type="project" value="GO_Central"/>
</dbReference>
<dbReference type="GO" id="GO:0005524">
    <property type="term" value="F:ATP binding"/>
    <property type="evidence" value="ECO:0007669"/>
    <property type="project" value="InterPro"/>
</dbReference>
<dbReference type="GO" id="GO:0004672">
    <property type="term" value="F:protein kinase activity"/>
    <property type="evidence" value="ECO:0000318"/>
    <property type="project" value="GO_Central"/>
</dbReference>
<dbReference type="GO" id="GO:0004713">
    <property type="term" value="F:protein tyrosine kinase activity"/>
    <property type="evidence" value="ECO:0007669"/>
    <property type="project" value="InterPro"/>
</dbReference>
<dbReference type="GO" id="GO:0008270">
    <property type="term" value="F:zinc ion binding"/>
    <property type="evidence" value="ECO:0007669"/>
    <property type="project" value="UniProtKB-KW"/>
</dbReference>
<dbReference type="GO" id="GO:0051321">
    <property type="term" value="P:meiotic cell cycle"/>
    <property type="evidence" value="ECO:0000315"/>
    <property type="project" value="WormBase"/>
</dbReference>
<dbReference type="GO" id="GO:0002119">
    <property type="term" value="P:nematode larval development"/>
    <property type="evidence" value="ECO:0000316"/>
    <property type="project" value="WormBase"/>
</dbReference>
<dbReference type="GO" id="GO:0045138">
    <property type="term" value="P:nematode male tail tip morphogenesis"/>
    <property type="evidence" value="ECO:0000316"/>
    <property type="project" value="WormBase"/>
</dbReference>
<dbReference type="GO" id="GO:0040026">
    <property type="term" value="P:positive regulation of vulval development"/>
    <property type="evidence" value="ECO:0000315"/>
    <property type="project" value="UniProtKB"/>
</dbReference>
<dbReference type="GO" id="GO:0007265">
    <property type="term" value="P:Ras protein signal transduction"/>
    <property type="evidence" value="ECO:0000316"/>
    <property type="project" value="WormBase"/>
</dbReference>
<dbReference type="GO" id="GO:0040025">
    <property type="term" value="P:vulval development"/>
    <property type="evidence" value="ECO:0000316"/>
    <property type="project" value="WormBase"/>
</dbReference>
<dbReference type="CDD" id="cd00029">
    <property type="entry name" value="C1"/>
    <property type="match status" value="1"/>
</dbReference>
<dbReference type="CDD" id="cd14063">
    <property type="entry name" value="PK_KSR"/>
    <property type="match status" value="1"/>
</dbReference>
<dbReference type="FunFam" id="3.30.200.20:FF:000911">
    <property type="entry name" value="Protein CBR-KSR-1"/>
    <property type="match status" value="1"/>
</dbReference>
<dbReference type="Gene3D" id="3.30.60.20">
    <property type="match status" value="1"/>
</dbReference>
<dbReference type="Gene3D" id="1.10.510.10">
    <property type="entry name" value="Transferase(Phosphotransferase) domain 1"/>
    <property type="match status" value="1"/>
</dbReference>
<dbReference type="InterPro" id="IPR046349">
    <property type="entry name" value="C1-like_sf"/>
</dbReference>
<dbReference type="InterPro" id="IPR011009">
    <property type="entry name" value="Kinase-like_dom_sf"/>
</dbReference>
<dbReference type="InterPro" id="IPR002219">
    <property type="entry name" value="PE/DAG-bd"/>
</dbReference>
<dbReference type="InterPro" id="IPR000719">
    <property type="entry name" value="Prot_kinase_dom"/>
</dbReference>
<dbReference type="InterPro" id="IPR001245">
    <property type="entry name" value="Ser-Thr/Tyr_kinase_cat_dom"/>
</dbReference>
<dbReference type="InterPro" id="IPR050167">
    <property type="entry name" value="Ser_Thr_protein_kinase"/>
</dbReference>
<dbReference type="InterPro" id="IPR008266">
    <property type="entry name" value="Tyr_kinase_AS"/>
</dbReference>
<dbReference type="InterPro" id="IPR020635">
    <property type="entry name" value="Tyr_kinase_cat_dom"/>
</dbReference>
<dbReference type="PANTHER" id="PTHR23257:SF760">
    <property type="entry name" value="KINASE SUPPRESSOR OF RAS B"/>
    <property type="match status" value="1"/>
</dbReference>
<dbReference type="PANTHER" id="PTHR23257">
    <property type="entry name" value="SERINE-THREONINE PROTEIN KINASE"/>
    <property type="match status" value="1"/>
</dbReference>
<dbReference type="Pfam" id="PF07714">
    <property type="entry name" value="PK_Tyr_Ser-Thr"/>
    <property type="match status" value="1"/>
</dbReference>
<dbReference type="SMART" id="SM00219">
    <property type="entry name" value="TyrKc"/>
    <property type="match status" value="1"/>
</dbReference>
<dbReference type="SUPFAM" id="SSF57889">
    <property type="entry name" value="Cysteine-rich domain"/>
    <property type="match status" value="1"/>
</dbReference>
<dbReference type="SUPFAM" id="SSF56112">
    <property type="entry name" value="Protein kinase-like (PK-like)"/>
    <property type="match status" value="1"/>
</dbReference>
<dbReference type="PROSITE" id="PS50011">
    <property type="entry name" value="PROTEIN_KINASE_DOM"/>
    <property type="match status" value="1"/>
</dbReference>
<dbReference type="PROSITE" id="PS00109">
    <property type="entry name" value="PROTEIN_KINASE_TYR"/>
    <property type="match status" value="1"/>
</dbReference>
<dbReference type="PROSITE" id="PS50081">
    <property type="entry name" value="ZF_DAG_PE_2"/>
    <property type="match status" value="1"/>
</dbReference>
<evidence type="ECO:0000255" key="1">
    <source>
        <dbReference type="PROSITE-ProRule" id="PRU00159"/>
    </source>
</evidence>
<evidence type="ECO:0000255" key="2">
    <source>
        <dbReference type="PROSITE-ProRule" id="PRU00226"/>
    </source>
</evidence>
<evidence type="ECO:0000256" key="3">
    <source>
        <dbReference type="SAM" id="MobiDB-lite"/>
    </source>
</evidence>
<evidence type="ECO:0000269" key="4">
    <source>
    </source>
</evidence>
<evidence type="ECO:0000269" key="5">
    <source>
    </source>
</evidence>
<evidence type="ECO:0000269" key="6">
    <source>
    </source>
</evidence>
<evidence type="ECO:0000305" key="7"/>
<evidence type="ECO:0000312" key="8">
    <source>
        <dbReference type="EMBL" id="AAL79358.1"/>
    </source>
</evidence>
<evidence type="ECO:0000312" key="9">
    <source>
        <dbReference type="Proteomes" id="UP000001940"/>
    </source>
</evidence>
<evidence type="ECO:0000312" key="10">
    <source>
        <dbReference type="WormBase" id="F58D5.4a"/>
    </source>
</evidence>
<evidence type="ECO:0000312" key="11">
    <source>
        <dbReference type="WormBase" id="F58D5.4b"/>
    </source>
</evidence>
<evidence type="ECO:0000312" key="12">
    <source>
        <dbReference type="WormBase" id="F58D5.4c"/>
    </source>
</evidence>
<comment type="function">
    <text evidence="4 5 6">Probable inactive protein kinase which positively regulates Ras-mediated signaling probably acting at the level of let-60/ras or/and lin-45/raf (PubMed:11882296, PubMed:23900546). In the germline, regulates meiotic progression during oogenesis and mpk-1 (isoform b) phosphorylation (PubMed:11882296, PubMed:26510792). Plays a role in meiotic recombination events (PubMed:26510792). Functions redundantly with ksr-1 in the Ras-mediated regulation of larval survival, the development of excretory canal, in determining vulval precursor cell fate during vulval induction and in mpk-1 phosphorylation in somatic cells (PubMed:11882296).</text>
</comment>
<comment type="subunit">
    <text evidence="5">Interacts with ndk-1.</text>
</comment>
<comment type="alternative products">
    <event type="alternative splicing"/>
    <isoform>
        <id>G5EDA5-1</id>
        <name evidence="10">a</name>
        <sequence type="displayed"/>
    </isoform>
    <isoform>
        <id>G5EDA5-2</id>
        <name evidence="11">b</name>
        <sequence type="described" ref="VSP_057950 VSP_057951"/>
    </isoform>
    <isoform>
        <id>G5EDA5-3</id>
        <name evidence="12">c</name>
        <sequence type="described" ref="VSP_057949"/>
    </isoform>
</comment>
<comment type="domain">
    <text evidence="1">The protein kinase domain is predicted to be catalytically inactive.</text>
</comment>
<comment type="disruption phenotype">
    <text evidence="4">RNAi-mediated knockdown causes sterility characterized by a lack of oocytes. In a ksr-1 n2526 mutant background, causes larval lethality.</text>
</comment>
<comment type="similarity">
    <text evidence="7">Belongs to the protein kinase superfamily. TKL Ser/Thr protein kinase family.</text>
</comment>
<reference evidence="8" key="1">
    <citation type="journal article" date="2002" name="Curr. Biol.">
        <title>C. elegans ksr-1 and ksr-2 have both unique and redundant functions and are required for MPK-1 ERK phosphorylation.</title>
        <authorList>
            <person name="Ohmachi M."/>
            <person name="Rocheleau C.E."/>
            <person name="Church D."/>
            <person name="Lambie E."/>
            <person name="Schedl T."/>
            <person name="Sundaram M.V."/>
        </authorList>
    </citation>
    <scope>NUCLEOTIDE SEQUENCE [MRNA] (ISOFORMS A AND B)</scope>
    <scope>FUNCTION</scope>
    <scope>DISRUPTION PHENOTYPE</scope>
</reference>
<reference evidence="9" key="2">
    <citation type="journal article" date="1998" name="Science">
        <title>Genome sequence of the nematode C. elegans: a platform for investigating biology.</title>
        <authorList>
            <consortium name="The C. elegans sequencing consortium"/>
        </authorList>
    </citation>
    <scope>NUCLEOTIDE SEQUENCE [LARGE SCALE GENOMIC DNA]</scope>
    <source>
        <strain evidence="9">Bristol N2</strain>
    </source>
</reference>
<reference evidence="7" key="3">
    <citation type="journal article" date="2013" name="Development">
        <title>The NM23-H1/H2 homolog NDK-1 is required for full activation of Ras signaling in C. elegans.</title>
        <authorList>
            <person name="Masoudi N."/>
            <person name="Fancsalszky L."/>
            <person name="Pourkarimi E."/>
            <person name="Vellai T."/>
            <person name="Alexa A."/>
            <person name="Remenyi A."/>
            <person name="Gartner A."/>
            <person name="Mehta A."/>
            <person name="Takacs-Vellai K."/>
        </authorList>
    </citation>
    <scope>FUNCTION</scope>
    <scope>INTERACTION WITH NDK-1</scope>
</reference>
<reference key="4">
    <citation type="journal article" date="2016" name="Genetics">
        <title>Coordination of Recombination with Meiotic Progression in the Caenorhabditis elegans Germline by KIN-18, a TAO Kinase That Regulates the Timing of MPK-1 Signaling.</title>
        <authorList>
            <person name="Yin Y."/>
            <person name="Donlevy S."/>
            <person name="Smolikove S."/>
        </authorList>
    </citation>
    <scope>FUNCTION</scope>
</reference>
<gene>
    <name evidence="10" type="primary">ksr-2</name>
    <name evidence="10" type="ORF">F58D5.4</name>
</gene>
<proteinExistence type="evidence at protein level"/>
<sequence length="550" mass="62796">MSDEKKKKRGFFRYSVLTTSSFSSWRRSSTSGSISQSSRTTSKTTTSSSVTSSNPINAPPPTATSSSSVLPSTSSEPPPPASAPPRISIYHKMVPSKSKFRQCDVCEHIFIFDFVRKQHLDDVYACNVCGIRVHKGCLDRVKNDCKITTQYMGGILENAVIQSNKKQWEKPTTASISKSLTTSPTCSTSTTMSPAGVEKNVHKTRKLISMTTSTLDDVTTFNSEINEEMDEETVLMTWEDVTIKLTDVDVMTKIGDGRFGSVYFGGYHGNAAVRFVNMNYLSQEDRRADVFATEIVSAYKNSRHDHIALFYGYVSDPVTNTYAIVTNFYQHNTLYHRIHEQLSEDFDQSWTFQISLQICQAMSYLHKKKILHRDLRTKNILLDNPNRVVVTDFALMKLERLENPRRNCTLLIPNHWIDYLSPEIAGNLMIDWRGDVLFQHELPFSQESDVYSFGTIFFELLLRRMPTGCDSWDQKLYAKMCGQKAALQRLDAQLQKIDGKLHELLLECWSSQPEKRPSFQQIVKRITVQMPRKESNKQKRRSTAHENPLF</sequence>
<name>KSRB_CAEEL</name>
<accession>G5EDA5</accession>
<accession>B3KYC3</accession>
<accession>G5EEY7</accession>
<protein>
    <recommendedName>
        <fullName evidence="7">Kinase suppressor of Ras B</fullName>
    </recommendedName>
</protein>